<sequence>MRLSQMLLVTLRDDPAEAEIPSHKLLIRAGYIRRIGNGIYAYLPLMLRVINKVSTIVREEMNATGAQECLLPQLQPAELWQESGRWDTYTQAEGIMFSLIDRQNRELGLGPTHEEVITTIAKDIIRSYRQLPIHLYQLQTKFRDEIRPRFGLMRGREFIMKDGYSFHADEESLKKTYQDMDKAYRNMLRRSGLQFRAVDADSGAIGGSASQEFMVLADAGEDEILYTQDGKYAANMEKAISLPVDVEASPFDTYDKLETPGTETIEKMCEFLHCSATNIVKNVLYQAVYDNGISVLVLVSIRGDQDVNDVKLLNELTRLAGNYEAKTVLALSVPDVEAQKKWAAKSLPLGYIAPDLSDDYITSSKQVSPKFLRMVDKTAVYLTNFATGSNELGNHIVGANWGQEFALPKLVVDVRKAKKGDRAVHDPSKTLETARGIEVGHIFQLGTKYSEAMGATYTNEQGQEVPLLMGCYGVGVSRLAQAAVEQSYDKDGIIWPVAIAPYHVVICIPNIKDTQQIEVAGNLYKELNEAGIDTILDDRDERAGVKFKDADLIGIPYRIVTGRSLKSGKVELIERSTHQCQEIVVAQVLSTLKDLIEKALK</sequence>
<accession>Q116D3</accession>
<dbReference type="EC" id="6.1.1.15" evidence="1"/>
<dbReference type="EMBL" id="CP000393">
    <property type="protein sequence ID" value="ABG50641.1"/>
    <property type="molecule type" value="Genomic_DNA"/>
</dbReference>
<dbReference type="RefSeq" id="WP_011611020.1">
    <property type="nucleotide sequence ID" value="NC_008312.1"/>
</dbReference>
<dbReference type="SMR" id="Q116D3"/>
<dbReference type="STRING" id="203124.Tery_1318"/>
<dbReference type="KEGG" id="ter:Tery_1318"/>
<dbReference type="eggNOG" id="COG0442">
    <property type="taxonomic scope" value="Bacteria"/>
</dbReference>
<dbReference type="HOGENOM" id="CLU_016739_0_0_3"/>
<dbReference type="OrthoDB" id="9809052at2"/>
<dbReference type="GO" id="GO:0005829">
    <property type="term" value="C:cytosol"/>
    <property type="evidence" value="ECO:0007669"/>
    <property type="project" value="TreeGrafter"/>
</dbReference>
<dbReference type="GO" id="GO:0002161">
    <property type="term" value="F:aminoacyl-tRNA deacylase activity"/>
    <property type="evidence" value="ECO:0007669"/>
    <property type="project" value="InterPro"/>
</dbReference>
<dbReference type="GO" id="GO:0005524">
    <property type="term" value="F:ATP binding"/>
    <property type="evidence" value="ECO:0007669"/>
    <property type="project" value="UniProtKB-UniRule"/>
</dbReference>
<dbReference type="GO" id="GO:0004827">
    <property type="term" value="F:proline-tRNA ligase activity"/>
    <property type="evidence" value="ECO:0007669"/>
    <property type="project" value="UniProtKB-UniRule"/>
</dbReference>
<dbReference type="GO" id="GO:0006433">
    <property type="term" value="P:prolyl-tRNA aminoacylation"/>
    <property type="evidence" value="ECO:0007669"/>
    <property type="project" value="UniProtKB-UniRule"/>
</dbReference>
<dbReference type="CDD" id="cd04334">
    <property type="entry name" value="ProRS-INS"/>
    <property type="match status" value="1"/>
</dbReference>
<dbReference type="CDD" id="cd00861">
    <property type="entry name" value="ProRS_anticodon_short"/>
    <property type="match status" value="1"/>
</dbReference>
<dbReference type="CDD" id="cd00779">
    <property type="entry name" value="ProRS_core_prok"/>
    <property type="match status" value="1"/>
</dbReference>
<dbReference type="FunFam" id="3.40.50.800:FF:000011">
    <property type="entry name" value="Proline--tRNA ligase"/>
    <property type="match status" value="1"/>
</dbReference>
<dbReference type="Gene3D" id="3.40.50.800">
    <property type="entry name" value="Anticodon-binding domain"/>
    <property type="match status" value="1"/>
</dbReference>
<dbReference type="Gene3D" id="3.30.930.10">
    <property type="entry name" value="Bira Bifunctional Protein, Domain 2"/>
    <property type="match status" value="2"/>
</dbReference>
<dbReference type="HAMAP" id="MF_01569">
    <property type="entry name" value="Pro_tRNA_synth_type1"/>
    <property type="match status" value="1"/>
</dbReference>
<dbReference type="InterPro" id="IPR002314">
    <property type="entry name" value="aa-tRNA-synt_IIb"/>
</dbReference>
<dbReference type="InterPro" id="IPR006195">
    <property type="entry name" value="aa-tRNA-synth_II"/>
</dbReference>
<dbReference type="InterPro" id="IPR045864">
    <property type="entry name" value="aa-tRNA-synth_II/BPL/LPL"/>
</dbReference>
<dbReference type="InterPro" id="IPR004154">
    <property type="entry name" value="Anticodon-bd"/>
</dbReference>
<dbReference type="InterPro" id="IPR036621">
    <property type="entry name" value="Anticodon-bd_dom_sf"/>
</dbReference>
<dbReference type="InterPro" id="IPR002316">
    <property type="entry name" value="Pro-tRNA-ligase_IIa"/>
</dbReference>
<dbReference type="InterPro" id="IPR004500">
    <property type="entry name" value="Pro-tRNA-synth_IIa_bac-type"/>
</dbReference>
<dbReference type="InterPro" id="IPR023717">
    <property type="entry name" value="Pro-tRNA-Synthase_IIa_type1"/>
</dbReference>
<dbReference type="InterPro" id="IPR050062">
    <property type="entry name" value="Pro-tRNA_synthetase"/>
</dbReference>
<dbReference type="InterPro" id="IPR044140">
    <property type="entry name" value="ProRS_anticodon_short"/>
</dbReference>
<dbReference type="InterPro" id="IPR033730">
    <property type="entry name" value="ProRS_core_prok"/>
</dbReference>
<dbReference type="InterPro" id="IPR036754">
    <property type="entry name" value="YbaK/aa-tRNA-synt-asso_dom_sf"/>
</dbReference>
<dbReference type="InterPro" id="IPR007214">
    <property type="entry name" value="YbaK/aa-tRNA-synth-assoc-dom"/>
</dbReference>
<dbReference type="NCBIfam" id="NF006625">
    <property type="entry name" value="PRK09194.1"/>
    <property type="match status" value="1"/>
</dbReference>
<dbReference type="NCBIfam" id="TIGR00409">
    <property type="entry name" value="proS_fam_II"/>
    <property type="match status" value="1"/>
</dbReference>
<dbReference type="PANTHER" id="PTHR42753">
    <property type="entry name" value="MITOCHONDRIAL RIBOSOME PROTEIN L39/PROLYL-TRNA LIGASE FAMILY MEMBER"/>
    <property type="match status" value="1"/>
</dbReference>
<dbReference type="PANTHER" id="PTHR42753:SF2">
    <property type="entry name" value="PROLINE--TRNA LIGASE"/>
    <property type="match status" value="1"/>
</dbReference>
<dbReference type="Pfam" id="PF03129">
    <property type="entry name" value="HGTP_anticodon"/>
    <property type="match status" value="1"/>
</dbReference>
<dbReference type="Pfam" id="PF00587">
    <property type="entry name" value="tRNA-synt_2b"/>
    <property type="match status" value="1"/>
</dbReference>
<dbReference type="Pfam" id="PF04073">
    <property type="entry name" value="tRNA_edit"/>
    <property type="match status" value="1"/>
</dbReference>
<dbReference type="PRINTS" id="PR01046">
    <property type="entry name" value="TRNASYNTHPRO"/>
</dbReference>
<dbReference type="SUPFAM" id="SSF52954">
    <property type="entry name" value="Class II aaRS ABD-related"/>
    <property type="match status" value="1"/>
</dbReference>
<dbReference type="SUPFAM" id="SSF55681">
    <property type="entry name" value="Class II aaRS and biotin synthetases"/>
    <property type="match status" value="1"/>
</dbReference>
<dbReference type="SUPFAM" id="SSF55826">
    <property type="entry name" value="YbaK/ProRS associated domain"/>
    <property type="match status" value="1"/>
</dbReference>
<dbReference type="PROSITE" id="PS50862">
    <property type="entry name" value="AA_TRNA_LIGASE_II"/>
    <property type="match status" value="1"/>
</dbReference>
<protein>
    <recommendedName>
        <fullName evidence="1">Proline--tRNA ligase</fullName>
        <ecNumber evidence="1">6.1.1.15</ecNumber>
    </recommendedName>
    <alternativeName>
        <fullName evidence="1">Prolyl-tRNA synthetase</fullName>
        <shortName evidence="1">ProRS</shortName>
    </alternativeName>
</protein>
<name>SYP_TRIEI</name>
<gene>
    <name evidence="1" type="primary">proS</name>
    <name type="ordered locus">Tery_1318</name>
</gene>
<organism>
    <name type="scientific">Trichodesmium erythraeum (strain IMS101)</name>
    <dbReference type="NCBI Taxonomy" id="203124"/>
    <lineage>
        <taxon>Bacteria</taxon>
        <taxon>Bacillati</taxon>
        <taxon>Cyanobacteriota</taxon>
        <taxon>Cyanophyceae</taxon>
        <taxon>Oscillatoriophycideae</taxon>
        <taxon>Oscillatoriales</taxon>
        <taxon>Microcoleaceae</taxon>
        <taxon>Trichodesmium</taxon>
    </lineage>
</organism>
<feature type="chain" id="PRO_0000288388" description="Proline--tRNA ligase">
    <location>
        <begin position="1"/>
        <end position="601"/>
    </location>
</feature>
<comment type="function">
    <text evidence="1">Catalyzes the attachment of proline to tRNA(Pro) in a two-step reaction: proline is first activated by ATP to form Pro-AMP and then transferred to the acceptor end of tRNA(Pro). As ProRS can inadvertently accommodate and process non-cognate amino acids such as alanine and cysteine, to avoid such errors it has two additional distinct editing activities against alanine. One activity is designated as 'pretransfer' editing and involves the tRNA(Pro)-independent hydrolysis of activated Ala-AMP. The other activity is designated 'posttransfer' editing and involves deacylation of mischarged Ala-tRNA(Pro). The misacylated Cys-tRNA(Pro) is not edited by ProRS.</text>
</comment>
<comment type="catalytic activity">
    <reaction evidence="1">
        <text>tRNA(Pro) + L-proline + ATP = L-prolyl-tRNA(Pro) + AMP + diphosphate</text>
        <dbReference type="Rhea" id="RHEA:14305"/>
        <dbReference type="Rhea" id="RHEA-COMP:9700"/>
        <dbReference type="Rhea" id="RHEA-COMP:9702"/>
        <dbReference type="ChEBI" id="CHEBI:30616"/>
        <dbReference type="ChEBI" id="CHEBI:33019"/>
        <dbReference type="ChEBI" id="CHEBI:60039"/>
        <dbReference type="ChEBI" id="CHEBI:78442"/>
        <dbReference type="ChEBI" id="CHEBI:78532"/>
        <dbReference type="ChEBI" id="CHEBI:456215"/>
        <dbReference type="EC" id="6.1.1.15"/>
    </reaction>
</comment>
<comment type="subunit">
    <text evidence="1">Homodimer.</text>
</comment>
<comment type="subcellular location">
    <subcellularLocation>
        <location evidence="1">Cytoplasm</location>
    </subcellularLocation>
</comment>
<comment type="domain">
    <text evidence="1">Consists of three domains: the N-terminal catalytic domain, the editing domain and the C-terminal anticodon-binding domain.</text>
</comment>
<comment type="similarity">
    <text evidence="1">Belongs to the class-II aminoacyl-tRNA synthetase family. ProS type 1 subfamily.</text>
</comment>
<proteinExistence type="inferred from homology"/>
<keyword id="KW-0030">Aminoacyl-tRNA synthetase</keyword>
<keyword id="KW-0067">ATP-binding</keyword>
<keyword id="KW-0963">Cytoplasm</keyword>
<keyword id="KW-0436">Ligase</keyword>
<keyword id="KW-0547">Nucleotide-binding</keyword>
<keyword id="KW-0648">Protein biosynthesis</keyword>
<evidence type="ECO:0000255" key="1">
    <source>
        <dbReference type="HAMAP-Rule" id="MF_01569"/>
    </source>
</evidence>
<reference key="1">
    <citation type="journal article" date="2015" name="Proc. Natl. Acad. Sci. U.S.A.">
        <title>Trichodesmium genome maintains abundant, widespread noncoding DNA in situ, despite oligotrophic lifestyle.</title>
        <authorList>
            <person name="Walworth N."/>
            <person name="Pfreundt U."/>
            <person name="Nelson W.C."/>
            <person name="Mincer T."/>
            <person name="Heidelberg J.F."/>
            <person name="Fu F."/>
            <person name="Waterbury J.B."/>
            <person name="Glavina del Rio T."/>
            <person name="Goodwin L."/>
            <person name="Kyrpides N.C."/>
            <person name="Land M.L."/>
            <person name="Woyke T."/>
            <person name="Hutchins D.A."/>
            <person name="Hess W.R."/>
            <person name="Webb E.A."/>
        </authorList>
    </citation>
    <scope>NUCLEOTIDE SEQUENCE [LARGE SCALE GENOMIC DNA]</scope>
    <source>
        <strain>IMS101</strain>
    </source>
</reference>